<reference key="1">
    <citation type="journal article" date="2008" name="J. Bacteriol.">
        <title>Insights into the environmental resistance gene pool from the genome sequence of the multidrug-resistant environmental isolate Escherichia coli SMS-3-5.</title>
        <authorList>
            <person name="Fricke W.F."/>
            <person name="Wright M.S."/>
            <person name="Lindell A.H."/>
            <person name="Harkins D.M."/>
            <person name="Baker-Austin C."/>
            <person name="Ravel J."/>
            <person name="Stepanauskas R."/>
        </authorList>
    </citation>
    <scope>NUCLEOTIDE SEQUENCE [LARGE SCALE GENOMIC DNA]</scope>
    <source>
        <strain>SMS-3-5 / SECEC</strain>
    </source>
</reference>
<sequence length="128" mass="13630">MRFAIVVTGPAYGTQQASSAFQFAQALIAEGHELSCVFFYREGVYNANQLTSPASDEFDLVRGWQQLNAQHGVALNICVAAALRRGIVDETEAGRLGLASSNLQSGFTLSGLGALAEASLTCDRVVQF</sequence>
<name>TUSD_ECOSM</name>
<proteinExistence type="inferred from homology"/>
<feature type="chain" id="PRO_1000122863" description="Sulfurtransferase TusD">
    <location>
        <begin position="1"/>
        <end position="128"/>
    </location>
</feature>
<feature type="active site" description="Cysteine persulfide intermediate" evidence="1">
    <location>
        <position position="78"/>
    </location>
</feature>
<keyword id="KW-0963">Cytoplasm</keyword>
<keyword id="KW-0808">Transferase</keyword>
<keyword id="KW-0819">tRNA processing</keyword>
<gene>
    <name evidence="1" type="primary">tusD</name>
    <name type="ordered locus">EcSMS35_3626</name>
</gene>
<protein>
    <recommendedName>
        <fullName evidence="1">Sulfurtransferase TusD</fullName>
        <ecNumber evidence="1">2.8.1.-</ecNumber>
    </recommendedName>
    <alternativeName>
        <fullName evidence="1">tRNA 2-thiouridine synthesizing protein D</fullName>
    </alternativeName>
</protein>
<dbReference type="EC" id="2.8.1.-" evidence="1"/>
<dbReference type="EMBL" id="CP000970">
    <property type="protein sequence ID" value="ACB17517.1"/>
    <property type="molecule type" value="Genomic_DNA"/>
</dbReference>
<dbReference type="RefSeq" id="WP_001209685.1">
    <property type="nucleotide sequence ID" value="NC_010498.1"/>
</dbReference>
<dbReference type="SMR" id="B1LHE5"/>
<dbReference type="KEGG" id="ecm:EcSMS35_3626"/>
<dbReference type="HOGENOM" id="CLU_132095_0_0_6"/>
<dbReference type="Proteomes" id="UP000007011">
    <property type="component" value="Chromosome"/>
</dbReference>
<dbReference type="GO" id="GO:1990228">
    <property type="term" value="C:sulfurtransferase complex"/>
    <property type="evidence" value="ECO:0007669"/>
    <property type="project" value="TreeGrafter"/>
</dbReference>
<dbReference type="GO" id="GO:0097163">
    <property type="term" value="F:sulfur carrier activity"/>
    <property type="evidence" value="ECO:0007669"/>
    <property type="project" value="TreeGrafter"/>
</dbReference>
<dbReference type="GO" id="GO:0016783">
    <property type="term" value="F:sulfurtransferase activity"/>
    <property type="evidence" value="ECO:0007669"/>
    <property type="project" value="UniProtKB-UniRule"/>
</dbReference>
<dbReference type="GO" id="GO:0002143">
    <property type="term" value="P:tRNA wobble position uridine thiolation"/>
    <property type="evidence" value="ECO:0007669"/>
    <property type="project" value="TreeGrafter"/>
</dbReference>
<dbReference type="FunFam" id="3.40.1260.10:FF:000001">
    <property type="entry name" value="Sulfurtransferase TusD"/>
    <property type="match status" value="1"/>
</dbReference>
<dbReference type="Gene3D" id="3.40.1260.10">
    <property type="entry name" value="DsrEFH-like"/>
    <property type="match status" value="1"/>
</dbReference>
<dbReference type="HAMAP" id="MF_00390">
    <property type="entry name" value="Thiourid_synth_D"/>
    <property type="match status" value="1"/>
</dbReference>
<dbReference type="InterPro" id="IPR027396">
    <property type="entry name" value="DsrEFH-like"/>
</dbReference>
<dbReference type="InterPro" id="IPR003787">
    <property type="entry name" value="Sulphur_relay_DsrE/F-like"/>
</dbReference>
<dbReference type="InterPro" id="IPR017463">
    <property type="entry name" value="Sulphur_relay_TusD/DsrE"/>
</dbReference>
<dbReference type="NCBIfam" id="NF001237">
    <property type="entry name" value="PRK00207.1"/>
    <property type="match status" value="1"/>
</dbReference>
<dbReference type="NCBIfam" id="TIGR03012">
    <property type="entry name" value="sulf_tusD_dsrE"/>
    <property type="match status" value="1"/>
</dbReference>
<dbReference type="PANTHER" id="PTHR34874">
    <property type="entry name" value="PROTEIN YCHN"/>
    <property type="match status" value="1"/>
</dbReference>
<dbReference type="PANTHER" id="PTHR34874:SF3">
    <property type="entry name" value="SULFURTRANSFERASE TUSD"/>
    <property type="match status" value="1"/>
</dbReference>
<dbReference type="Pfam" id="PF02635">
    <property type="entry name" value="DsrE"/>
    <property type="match status" value="1"/>
</dbReference>
<dbReference type="SUPFAM" id="SSF75169">
    <property type="entry name" value="DsrEFH-like"/>
    <property type="match status" value="1"/>
</dbReference>
<comment type="function">
    <text evidence="1">Part of a sulfur-relay system required for 2-thiolation of 5-methylaminomethyl-2-thiouridine (mnm(5)s(2)U) at tRNA wobble positions. Accepts sulfur from TusA and transfers it in turn to TusE.</text>
</comment>
<comment type="subunit">
    <text evidence="1">Heterohexamer, formed by a dimer of trimers. The hexameric TusBCD complex contains 2 copies each of TusB, TusC and TusD. The TusBCD complex interacts with TusE.</text>
</comment>
<comment type="subcellular location">
    <subcellularLocation>
        <location evidence="1">Cytoplasm</location>
    </subcellularLocation>
</comment>
<comment type="similarity">
    <text evidence="1">Belongs to the DsrE/TusD family.</text>
</comment>
<accession>B1LHE5</accession>
<organism>
    <name type="scientific">Escherichia coli (strain SMS-3-5 / SECEC)</name>
    <dbReference type="NCBI Taxonomy" id="439855"/>
    <lineage>
        <taxon>Bacteria</taxon>
        <taxon>Pseudomonadati</taxon>
        <taxon>Pseudomonadota</taxon>
        <taxon>Gammaproteobacteria</taxon>
        <taxon>Enterobacterales</taxon>
        <taxon>Enterobacteriaceae</taxon>
        <taxon>Escherichia</taxon>
    </lineage>
</organism>
<evidence type="ECO:0000255" key="1">
    <source>
        <dbReference type="HAMAP-Rule" id="MF_00390"/>
    </source>
</evidence>